<reference key="1">
    <citation type="journal article" date="2009" name="J. Bacteriol.">
        <title>Genomic sequencing reveals regulatory mutations and recombinational events in the widely used MC4100 lineage of Escherichia coli K-12.</title>
        <authorList>
            <person name="Ferenci T."/>
            <person name="Zhou Z."/>
            <person name="Betteridge T."/>
            <person name="Ren Y."/>
            <person name="Liu Y."/>
            <person name="Feng L."/>
            <person name="Reeves P.R."/>
            <person name="Wang L."/>
        </authorList>
    </citation>
    <scope>NUCLEOTIDE SEQUENCE [LARGE SCALE GENOMIC DNA]</scope>
    <source>
        <strain>K12 / MC4100 / BW2952</strain>
    </source>
</reference>
<accession>C4ZRD1</accession>
<gene>
    <name evidence="1" type="primary">pepA</name>
    <name type="ordered locus">BWG_3966</name>
</gene>
<feature type="chain" id="PRO_1000203826" description="Probable cytosol aminopeptidase">
    <location>
        <begin position="1"/>
        <end position="503"/>
    </location>
</feature>
<feature type="active site" evidence="1">
    <location>
        <position position="282"/>
    </location>
</feature>
<feature type="active site" evidence="1">
    <location>
        <position position="356"/>
    </location>
</feature>
<feature type="binding site" evidence="1">
    <location>
        <position position="270"/>
    </location>
    <ligand>
        <name>Mn(2+)</name>
        <dbReference type="ChEBI" id="CHEBI:29035"/>
        <label>2</label>
    </ligand>
</feature>
<feature type="binding site" evidence="1">
    <location>
        <position position="275"/>
    </location>
    <ligand>
        <name>Mn(2+)</name>
        <dbReference type="ChEBI" id="CHEBI:29035"/>
        <label>1</label>
    </ligand>
</feature>
<feature type="binding site" evidence="1">
    <location>
        <position position="275"/>
    </location>
    <ligand>
        <name>Mn(2+)</name>
        <dbReference type="ChEBI" id="CHEBI:29035"/>
        <label>2</label>
    </ligand>
</feature>
<feature type="binding site" evidence="1">
    <location>
        <position position="293"/>
    </location>
    <ligand>
        <name>Mn(2+)</name>
        <dbReference type="ChEBI" id="CHEBI:29035"/>
        <label>2</label>
    </ligand>
</feature>
<feature type="binding site" evidence="1">
    <location>
        <position position="352"/>
    </location>
    <ligand>
        <name>Mn(2+)</name>
        <dbReference type="ChEBI" id="CHEBI:29035"/>
        <label>1</label>
    </ligand>
</feature>
<feature type="binding site" evidence="1">
    <location>
        <position position="354"/>
    </location>
    <ligand>
        <name>Mn(2+)</name>
        <dbReference type="ChEBI" id="CHEBI:29035"/>
        <label>1</label>
    </ligand>
</feature>
<feature type="binding site" evidence="1">
    <location>
        <position position="354"/>
    </location>
    <ligand>
        <name>Mn(2+)</name>
        <dbReference type="ChEBI" id="CHEBI:29035"/>
        <label>2</label>
    </ligand>
</feature>
<evidence type="ECO:0000255" key="1">
    <source>
        <dbReference type="HAMAP-Rule" id="MF_00181"/>
    </source>
</evidence>
<organism>
    <name type="scientific">Escherichia coli (strain K12 / MC4100 / BW2952)</name>
    <dbReference type="NCBI Taxonomy" id="595496"/>
    <lineage>
        <taxon>Bacteria</taxon>
        <taxon>Pseudomonadati</taxon>
        <taxon>Pseudomonadota</taxon>
        <taxon>Gammaproteobacteria</taxon>
        <taxon>Enterobacterales</taxon>
        <taxon>Enterobacteriaceae</taxon>
        <taxon>Escherichia</taxon>
    </lineage>
</organism>
<dbReference type="EC" id="3.4.11.1" evidence="1"/>
<dbReference type="EC" id="3.4.11.10" evidence="1"/>
<dbReference type="EMBL" id="CP001396">
    <property type="protein sequence ID" value="ACR61979.1"/>
    <property type="molecule type" value="Genomic_DNA"/>
</dbReference>
<dbReference type="RefSeq" id="WP_000397144.1">
    <property type="nucleotide sequence ID" value="NC_012759.1"/>
</dbReference>
<dbReference type="SMR" id="C4ZRD1"/>
<dbReference type="MEROPS" id="M17.003"/>
<dbReference type="GeneID" id="93777558"/>
<dbReference type="KEGG" id="ebw:BWG_3966"/>
<dbReference type="HOGENOM" id="CLU_013734_2_2_6"/>
<dbReference type="GO" id="GO:0005737">
    <property type="term" value="C:cytoplasm"/>
    <property type="evidence" value="ECO:0007669"/>
    <property type="project" value="UniProtKB-SubCell"/>
</dbReference>
<dbReference type="GO" id="GO:0004177">
    <property type="term" value="F:aminopeptidase activity"/>
    <property type="evidence" value="ECO:0000314"/>
    <property type="project" value="CAFA"/>
</dbReference>
<dbReference type="GO" id="GO:0003677">
    <property type="term" value="F:DNA binding"/>
    <property type="evidence" value="ECO:0000314"/>
    <property type="project" value="CAFA"/>
</dbReference>
<dbReference type="GO" id="GO:0030145">
    <property type="term" value="F:manganese ion binding"/>
    <property type="evidence" value="ECO:0007669"/>
    <property type="project" value="UniProtKB-UniRule"/>
</dbReference>
<dbReference type="GO" id="GO:0070006">
    <property type="term" value="F:metalloaminopeptidase activity"/>
    <property type="evidence" value="ECO:0007669"/>
    <property type="project" value="InterPro"/>
</dbReference>
<dbReference type="GO" id="GO:1903770">
    <property type="term" value="P:negative regulation of beta-galactosidase activity"/>
    <property type="evidence" value="ECO:0000315"/>
    <property type="project" value="CAFA"/>
</dbReference>
<dbReference type="GO" id="GO:2000143">
    <property type="term" value="P:negative regulation of DNA-templated transcription initiation"/>
    <property type="evidence" value="ECO:0000315"/>
    <property type="project" value="CAFA"/>
</dbReference>
<dbReference type="GO" id="GO:0006508">
    <property type="term" value="P:proteolysis"/>
    <property type="evidence" value="ECO:0007669"/>
    <property type="project" value="UniProtKB-KW"/>
</dbReference>
<dbReference type="GO" id="GO:0071139">
    <property type="term" value="P:resolution of DNA recombination intermediates"/>
    <property type="evidence" value="ECO:0000315"/>
    <property type="project" value="CAFA"/>
</dbReference>
<dbReference type="CDD" id="cd00433">
    <property type="entry name" value="Peptidase_M17"/>
    <property type="match status" value="1"/>
</dbReference>
<dbReference type="FunFam" id="3.40.220.10:FF:000001">
    <property type="entry name" value="Probable cytosol aminopeptidase"/>
    <property type="match status" value="1"/>
</dbReference>
<dbReference type="FunFam" id="3.40.630.10:FF:000004">
    <property type="entry name" value="Probable cytosol aminopeptidase"/>
    <property type="match status" value="1"/>
</dbReference>
<dbReference type="Gene3D" id="3.40.220.10">
    <property type="entry name" value="Leucine Aminopeptidase, subunit E, domain 1"/>
    <property type="match status" value="1"/>
</dbReference>
<dbReference type="Gene3D" id="3.40.630.10">
    <property type="entry name" value="Zn peptidases"/>
    <property type="match status" value="1"/>
</dbReference>
<dbReference type="HAMAP" id="MF_00181">
    <property type="entry name" value="Cytosol_peptidase_M17"/>
    <property type="match status" value="1"/>
</dbReference>
<dbReference type="InterPro" id="IPR011356">
    <property type="entry name" value="Leucine_aapep/pepB"/>
</dbReference>
<dbReference type="InterPro" id="IPR043472">
    <property type="entry name" value="Macro_dom-like"/>
</dbReference>
<dbReference type="InterPro" id="IPR000819">
    <property type="entry name" value="Peptidase_M17_C"/>
</dbReference>
<dbReference type="InterPro" id="IPR023042">
    <property type="entry name" value="Peptidase_M17_leu_NH2_pept"/>
</dbReference>
<dbReference type="InterPro" id="IPR008283">
    <property type="entry name" value="Peptidase_M17_N"/>
</dbReference>
<dbReference type="NCBIfam" id="NF002072">
    <property type="entry name" value="PRK00913.1-1"/>
    <property type="match status" value="1"/>
</dbReference>
<dbReference type="NCBIfam" id="NF002073">
    <property type="entry name" value="PRK00913.1-2"/>
    <property type="match status" value="1"/>
</dbReference>
<dbReference type="NCBIfam" id="NF002074">
    <property type="entry name" value="PRK00913.1-4"/>
    <property type="match status" value="1"/>
</dbReference>
<dbReference type="PANTHER" id="PTHR11963:SF23">
    <property type="entry name" value="CYTOSOL AMINOPEPTIDASE"/>
    <property type="match status" value="1"/>
</dbReference>
<dbReference type="PANTHER" id="PTHR11963">
    <property type="entry name" value="LEUCINE AMINOPEPTIDASE-RELATED"/>
    <property type="match status" value="1"/>
</dbReference>
<dbReference type="Pfam" id="PF00883">
    <property type="entry name" value="Peptidase_M17"/>
    <property type="match status" value="1"/>
</dbReference>
<dbReference type="Pfam" id="PF02789">
    <property type="entry name" value="Peptidase_M17_N"/>
    <property type="match status" value="1"/>
</dbReference>
<dbReference type="PRINTS" id="PR00481">
    <property type="entry name" value="LAMNOPPTDASE"/>
</dbReference>
<dbReference type="SUPFAM" id="SSF52949">
    <property type="entry name" value="Macro domain-like"/>
    <property type="match status" value="1"/>
</dbReference>
<dbReference type="SUPFAM" id="SSF53187">
    <property type="entry name" value="Zn-dependent exopeptidases"/>
    <property type="match status" value="1"/>
</dbReference>
<dbReference type="PROSITE" id="PS00631">
    <property type="entry name" value="CYTOSOL_AP"/>
    <property type="match status" value="1"/>
</dbReference>
<proteinExistence type="inferred from homology"/>
<protein>
    <recommendedName>
        <fullName evidence="1">Probable cytosol aminopeptidase</fullName>
        <ecNumber evidence="1">3.4.11.1</ecNumber>
    </recommendedName>
    <alternativeName>
        <fullName evidence="1">Leucine aminopeptidase</fullName>
        <shortName evidence="1">LAP</shortName>
        <ecNumber evidence="1">3.4.11.10</ecNumber>
    </alternativeName>
    <alternativeName>
        <fullName evidence="1">Leucyl aminopeptidase</fullName>
    </alternativeName>
</protein>
<keyword id="KW-0031">Aminopeptidase</keyword>
<keyword id="KW-0963">Cytoplasm</keyword>
<keyword id="KW-0378">Hydrolase</keyword>
<keyword id="KW-0464">Manganese</keyword>
<keyword id="KW-0479">Metal-binding</keyword>
<keyword id="KW-0645">Protease</keyword>
<comment type="function">
    <text evidence="1">Presumably involved in the processing and regular turnover of intracellular proteins. Catalyzes the removal of unsubstituted N-terminal amino acids from various peptides.</text>
</comment>
<comment type="catalytic activity">
    <reaction evidence="1">
        <text>Release of an N-terminal amino acid, Xaa-|-Yaa-, in which Xaa is preferably Leu, but may be other amino acids including Pro although not Arg or Lys, and Yaa may be Pro. Amino acid amides and methyl esters are also readily hydrolyzed, but rates on arylamides are exceedingly low.</text>
        <dbReference type="EC" id="3.4.11.1"/>
    </reaction>
</comment>
<comment type="catalytic activity">
    <reaction evidence="1">
        <text>Release of an N-terminal amino acid, preferentially leucine, but not glutamic or aspartic acids.</text>
        <dbReference type="EC" id="3.4.11.10"/>
    </reaction>
</comment>
<comment type="cofactor">
    <cofactor evidence="1">
        <name>Mn(2+)</name>
        <dbReference type="ChEBI" id="CHEBI:29035"/>
    </cofactor>
    <text evidence="1">Binds 2 manganese ions per subunit.</text>
</comment>
<comment type="subcellular location">
    <subcellularLocation>
        <location evidence="1">Cytoplasm</location>
    </subcellularLocation>
</comment>
<comment type="similarity">
    <text evidence="1">Belongs to the peptidase M17 family.</text>
</comment>
<sequence length="503" mass="54880">MEFSVKSGSPEKQRSACIVVGVFEPRRLSPIAEQLDKISDGYISALLRRGELEGKPGQTLLLHHVPNVLSERILLIGCGKERELDERQYKQVIQKTINTLNDTGSMEAVCFLTELHVKGRNNYWKVRQAVETAKETLYSFDQLKTNKSEPRRPLRKMVFNVPTRRELTSGERAIQHGLAIAAGIKAAKDLGNMPPNICNAAYLASQARQLADSYSKNVITRVIGEQQMKELGMHSYLAVGQGSQNESLMSVIEYKGNASEDARPIVLVGKGLTFDSGGISIKPSEGMDEMKYDMCGAAAVYGVMRMVAELQLPINVIGVLAGCENMPGGRAYRPGDVLTTMSGQTVEVLNTDAEGRLVLCDVLTYVERFEPEAVIDVATLTGACVIALGHHITGLMANHNPLAHELIAASEQSGDRAWRLPLGDEYQEQLESNFADMANIGGRPGGAITAGCFLSRFTRKYNWAHLDIAGTAWRSGKAKGATGRPVALLAQFLLNRAGFNGEE</sequence>
<name>AMPA_ECOBW</name>